<gene>
    <name evidence="1" type="primary">atpA</name>
    <name type="ordered locus">EcE24377A_4250</name>
</gene>
<feature type="chain" id="PRO_1000067711" description="ATP synthase subunit alpha">
    <location>
        <begin position="1"/>
        <end position="513"/>
    </location>
</feature>
<feature type="binding site" evidence="1">
    <location>
        <begin position="169"/>
        <end position="176"/>
    </location>
    <ligand>
        <name>ATP</name>
        <dbReference type="ChEBI" id="CHEBI:30616"/>
    </ligand>
</feature>
<feature type="site" description="Required for activity" evidence="1">
    <location>
        <position position="373"/>
    </location>
</feature>
<comment type="function">
    <text evidence="1">Produces ATP from ADP in the presence of a proton gradient across the membrane. The alpha chain is a regulatory subunit.</text>
</comment>
<comment type="catalytic activity">
    <reaction evidence="1">
        <text>ATP + H2O + 4 H(+)(in) = ADP + phosphate + 5 H(+)(out)</text>
        <dbReference type="Rhea" id="RHEA:57720"/>
        <dbReference type="ChEBI" id="CHEBI:15377"/>
        <dbReference type="ChEBI" id="CHEBI:15378"/>
        <dbReference type="ChEBI" id="CHEBI:30616"/>
        <dbReference type="ChEBI" id="CHEBI:43474"/>
        <dbReference type="ChEBI" id="CHEBI:456216"/>
        <dbReference type="EC" id="7.1.2.2"/>
    </reaction>
</comment>
<comment type="subunit">
    <text evidence="1">F-type ATPases have 2 components, CF(1) - the catalytic core - and CF(0) - the membrane proton channel. CF(1) has five subunits: alpha(3), beta(3), gamma(1), delta(1), epsilon(1). CF(0) has three main subunits: a(1), b(2) and c(9-12). The alpha and beta chains form an alternating ring which encloses part of the gamma chain. CF(1) is attached to CF(0) by a central stalk formed by the gamma and epsilon chains, while a peripheral stalk is formed by the delta and b chains.</text>
</comment>
<comment type="subcellular location">
    <subcellularLocation>
        <location evidence="1">Cell inner membrane</location>
        <topology evidence="1">Peripheral membrane protein</topology>
    </subcellularLocation>
</comment>
<comment type="similarity">
    <text evidence="1">Belongs to the ATPase alpha/beta chains family.</text>
</comment>
<reference key="1">
    <citation type="journal article" date="2008" name="J. Bacteriol.">
        <title>The pangenome structure of Escherichia coli: comparative genomic analysis of E. coli commensal and pathogenic isolates.</title>
        <authorList>
            <person name="Rasko D.A."/>
            <person name="Rosovitz M.J."/>
            <person name="Myers G.S.A."/>
            <person name="Mongodin E.F."/>
            <person name="Fricke W.F."/>
            <person name="Gajer P."/>
            <person name="Crabtree J."/>
            <person name="Sebaihia M."/>
            <person name="Thomson N.R."/>
            <person name="Chaudhuri R."/>
            <person name="Henderson I.R."/>
            <person name="Sperandio V."/>
            <person name="Ravel J."/>
        </authorList>
    </citation>
    <scope>NUCLEOTIDE SEQUENCE [LARGE SCALE GENOMIC DNA]</scope>
    <source>
        <strain>E24377A / ETEC</strain>
    </source>
</reference>
<dbReference type="EC" id="7.1.2.2" evidence="1"/>
<dbReference type="EMBL" id="CP000800">
    <property type="protein sequence ID" value="ABV16799.1"/>
    <property type="molecule type" value="Genomic_DNA"/>
</dbReference>
<dbReference type="RefSeq" id="WP_001176745.1">
    <property type="nucleotide sequence ID" value="NC_009801.1"/>
</dbReference>
<dbReference type="SMR" id="A7ZTU6"/>
<dbReference type="GeneID" id="93778233"/>
<dbReference type="KEGG" id="ecw:EcE24377A_4250"/>
<dbReference type="HOGENOM" id="CLU_010091_2_1_6"/>
<dbReference type="Proteomes" id="UP000001122">
    <property type="component" value="Chromosome"/>
</dbReference>
<dbReference type="GO" id="GO:0005886">
    <property type="term" value="C:plasma membrane"/>
    <property type="evidence" value="ECO:0007669"/>
    <property type="project" value="UniProtKB-SubCell"/>
</dbReference>
<dbReference type="GO" id="GO:0045259">
    <property type="term" value="C:proton-transporting ATP synthase complex"/>
    <property type="evidence" value="ECO:0007669"/>
    <property type="project" value="UniProtKB-KW"/>
</dbReference>
<dbReference type="GO" id="GO:0043531">
    <property type="term" value="F:ADP binding"/>
    <property type="evidence" value="ECO:0007669"/>
    <property type="project" value="TreeGrafter"/>
</dbReference>
<dbReference type="GO" id="GO:0005524">
    <property type="term" value="F:ATP binding"/>
    <property type="evidence" value="ECO:0007669"/>
    <property type="project" value="UniProtKB-UniRule"/>
</dbReference>
<dbReference type="GO" id="GO:0046933">
    <property type="term" value="F:proton-transporting ATP synthase activity, rotational mechanism"/>
    <property type="evidence" value="ECO:0007669"/>
    <property type="project" value="UniProtKB-UniRule"/>
</dbReference>
<dbReference type="CDD" id="cd18113">
    <property type="entry name" value="ATP-synt_F1_alpha_C"/>
    <property type="match status" value="1"/>
</dbReference>
<dbReference type="CDD" id="cd18116">
    <property type="entry name" value="ATP-synt_F1_alpha_N"/>
    <property type="match status" value="1"/>
</dbReference>
<dbReference type="CDD" id="cd01132">
    <property type="entry name" value="F1-ATPase_alpha_CD"/>
    <property type="match status" value="1"/>
</dbReference>
<dbReference type="FunFam" id="1.20.150.20:FF:000001">
    <property type="entry name" value="ATP synthase subunit alpha"/>
    <property type="match status" value="1"/>
</dbReference>
<dbReference type="FunFam" id="2.40.30.20:FF:000001">
    <property type="entry name" value="ATP synthase subunit alpha"/>
    <property type="match status" value="1"/>
</dbReference>
<dbReference type="FunFam" id="3.40.50.300:FF:000002">
    <property type="entry name" value="ATP synthase subunit alpha"/>
    <property type="match status" value="1"/>
</dbReference>
<dbReference type="Gene3D" id="2.40.30.20">
    <property type="match status" value="1"/>
</dbReference>
<dbReference type="Gene3D" id="1.20.150.20">
    <property type="entry name" value="ATP synthase alpha/beta chain, C-terminal domain"/>
    <property type="match status" value="1"/>
</dbReference>
<dbReference type="Gene3D" id="3.40.50.300">
    <property type="entry name" value="P-loop containing nucleotide triphosphate hydrolases"/>
    <property type="match status" value="1"/>
</dbReference>
<dbReference type="HAMAP" id="MF_01346">
    <property type="entry name" value="ATP_synth_alpha_bact"/>
    <property type="match status" value="1"/>
</dbReference>
<dbReference type="InterPro" id="IPR023366">
    <property type="entry name" value="ATP_synth_asu-like_sf"/>
</dbReference>
<dbReference type="InterPro" id="IPR000793">
    <property type="entry name" value="ATP_synth_asu_C"/>
</dbReference>
<dbReference type="InterPro" id="IPR038376">
    <property type="entry name" value="ATP_synth_asu_C_sf"/>
</dbReference>
<dbReference type="InterPro" id="IPR033732">
    <property type="entry name" value="ATP_synth_F1_a_nt-bd_dom"/>
</dbReference>
<dbReference type="InterPro" id="IPR005294">
    <property type="entry name" value="ATP_synth_F1_asu"/>
</dbReference>
<dbReference type="InterPro" id="IPR020003">
    <property type="entry name" value="ATPase_a/bsu_AS"/>
</dbReference>
<dbReference type="InterPro" id="IPR004100">
    <property type="entry name" value="ATPase_F1/V1/A1_a/bsu_N"/>
</dbReference>
<dbReference type="InterPro" id="IPR036121">
    <property type="entry name" value="ATPase_F1/V1/A1_a/bsu_N_sf"/>
</dbReference>
<dbReference type="InterPro" id="IPR000194">
    <property type="entry name" value="ATPase_F1/V1/A1_a/bsu_nucl-bd"/>
</dbReference>
<dbReference type="InterPro" id="IPR027417">
    <property type="entry name" value="P-loop_NTPase"/>
</dbReference>
<dbReference type="NCBIfam" id="TIGR00962">
    <property type="entry name" value="atpA"/>
    <property type="match status" value="1"/>
</dbReference>
<dbReference type="NCBIfam" id="NF009884">
    <property type="entry name" value="PRK13343.1"/>
    <property type="match status" value="1"/>
</dbReference>
<dbReference type="PANTHER" id="PTHR48082">
    <property type="entry name" value="ATP SYNTHASE SUBUNIT ALPHA, MITOCHONDRIAL"/>
    <property type="match status" value="1"/>
</dbReference>
<dbReference type="PANTHER" id="PTHR48082:SF2">
    <property type="entry name" value="ATP SYNTHASE SUBUNIT ALPHA, MITOCHONDRIAL"/>
    <property type="match status" value="1"/>
</dbReference>
<dbReference type="Pfam" id="PF00006">
    <property type="entry name" value="ATP-synt_ab"/>
    <property type="match status" value="1"/>
</dbReference>
<dbReference type="Pfam" id="PF00306">
    <property type="entry name" value="ATP-synt_ab_C"/>
    <property type="match status" value="1"/>
</dbReference>
<dbReference type="Pfam" id="PF02874">
    <property type="entry name" value="ATP-synt_ab_N"/>
    <property type="match status" value="1"/>
</dbReference>
<dbReference type="SUPFAM" id="SSF47917">
    <property type="entry name" value="C-terminal domain of alpha and beta subunits of F1 ATP synthase"/>
    <property type="match status" value="1"/>
</dbReference>
<dbReference type="SUPFAM" id="SSF50615">
    <property type="entry name" value="N-terminal domain of alpha and beta subunits of F1 ATP synthase"/>
    <property type="match status" value="1"/>
</dbReference>
<dbReference type="SUPFAM" id="SSF52540">
    <property type="entry name" value="P-loop containing nucleoside triphosphate hydrolases"/>
    <property type="match status" value="1"/>
</dbReference>
<dbReference type="PROSITE" id="PS00152">
    <property type="entry name" value="ATPASE_ALPHA_BETA"/>
    <property type="match status" value="1"/>
</dbReference>
<sequence>MQLNSTEISELIKQRIAQFNVVSEAHNEGTIVSVSDGVIRIHGLADCMQGEMISLPGNRYAIALNLERDSVGAVVMGPYADLAEGMKVKCTGRILEVPVGRGLLGRVVNTLGAPIDGKGPLDHDGFSAVEAIAPGVIERQSVDQPVQTGYKAVDSMIPIGRGQRELIIGDRQTGKTALAIDAIINQRDSGIKCIYVAIGQKASTISNVVRKLEEHGALANTIVVVATASESAALQYLAPYAGCAMGEYFRDRGEDALIIYDDLSKQAVAYRQISLLLRRPPGREAFPGDVFYLHSRLLERAARVNAEYVEAFTKGEVKGKTGSLTALPIIETQAGDVSAFVPTNVISITDGQIFLETNLFNAGIRPAVNPGISVSRVGGAAQTKIMKKLSGGIRTALAQYRELAAFSQFASDLDDATRKQLDHGQKVTELLKQKQYAPMSVAQQSLVLFAAERGYLADVELSKIGSFEAALLAYVDRDHAPLMQEINQTGGYNDEIEGKLKGILDSFKATQSW</sequence>
<proteinExistence type="inferred from homology"/>
<name>ATPA_ECO24</name>
<evidence type="ECO:0000255" key="1">
    <source>
        <dbReference type="HAMAP-Rule" id="MF_01346"/>
    </source>
</evidence>
<keyword id="KW-0066">ATP synthesis</keyword>
<keyword id="KW-0067">ATP-binding</keyword>
<keyword id="KW-0997">Cell inner membrane</keyword>
<keyword id="KW-1003">Cell membrane</keyword>
<keyword id="KW-0139">CF(1)</keyword>
<keyword id="KW-0375">Hydrogen ion transport</keyword>
<keyword id="KW-0406">Ion transport</keyword>
<keyword id="KW-0472">Membrane</keyword>
<keyword id="KW-0547">Nucleotide-binding</keyword>
<keyword id="KW-1185">Reference proteome</keyword>
<keyword id="KW-1278">Translocase</keyword>
<keyword id="KW-0813">Transport</keyword>
<protein>
    <recommendedName>
        <fullName evidence="1">ATP synthase subunit alpha</fullName>
        <ecNumber evidence="1">7.1.2.2</ecNumber>
    </recommendedName>
    <alternativeName>
        <fullName evidence="1">ATP synthase F1 sector subunit alpha</fullName>
    </alternativeName>
    <alternativeName>
        <fullName evidence="1">F-ATPase subunit alpha</fullName>
    </alternativeName>
</protein>
<accession>A7ZTU6</accession>
<organism>
    <name type="scientific">Escherichia coli O139:H28 (strain E24377A / ETEC)</name>
    <dbReference type="NCBI Taxonomy" id="331111"/>
    <lineage>
        <taxon>Bacteria</taxon>
        <taxon>Pseudomonadati</taxon>
        <taxon>Pseudomonadota</taxon>
        <taxon>Gammaproteobacteria</taxon>
        <taxon>Enterobacterales</taxon>
        <taxon>Enterobacteriaceae</taxon>
        <taxon>Escherichia</taxon>
    </lineage>
</organism>